<sequence>MALILPCTFCTSLQKKNFPINRRYITNFRRGATTATCEFRIPVEVSTPSDRGSLVVPSHKVTVHDRQRGVVHEFEVPEDQYILHSAESQNISLPFACRHGCCTSCAVRVKSGELRQPQALGISAELKSQGYALLCVGFPTSDLEVETQDEDEVYWLQFGRYFARGPIERDDYALELAMGDE</sequence>
<feature type="transit peptide" description="Chloroplast" evidence="2">
    <location>
        <begin position="1"/>
        <end position="44"/>
    </location>
</feature>
<feature type="chain" id="PRO_0000443799" description="Ferredoxin C 2, chloroplastic">
    <location>
        <begin position="45"/>
        <end position="181"/>
    </location>
</feature>
<feature type="domain" description="2Fe-2S ferredoxin-type" evidence="3">
    <location>
        <begin position="59"/>
        <end position="151"/>
    </location>
</feature>
<feature type="binding site" evidence="3">
    <location>
        <position position="97"/>
    </location>
    <ligand>
        <name>[2Fe-2S] cluster</name>
        <dbReference type="ChEBI" id="CHEBI:190135"/>
    </ligand>
</feature>
<feature type="binding site" evidence="3">
    <location>
        <position position="102"/>
    </location>
    <ligand>
        <name>[2Fe-2S] cluster</name>
        <dbReference type="ChEBI" id="CHEBI:190135"/>
    </ligand>
</feature>
<feature type="binding site" evidence="3">
    <location>
        <position position="105"/>
    </location>
    <ligand>
        <name>[2Fe-2S] cluster</name>
        <dbReference type="ChEBI" id="CHEBI:190135"/>
    </ligand>
</feature>
<feature type="binding site" evidence="3">
    <location>
        <position position="135"/>
    </location>
    <ligand>
        <name>[2Fe-2S] cluster</name>
        <dbReference type="ChEBI" id="CHEBI:190135"/>
    </ligand>
</feature>
<proteinExistence type="evidence at transcript level"/>
<accession>Q9C7Y4</accession>
<protein>
    <recommendedName>
        <fullName evidence="5">Ferredoxin C 2, chloroplastic</fullName>
        <shortName evidence="5">AtFdC2</shortName>
    </recommendedName>
</protein>
<dbReference type="EMBL" id="AC055769">
    <property type="protein sequence ID" value="AAG51248.1"/>
    <property type="molecule type" value="Genomic_DNA"/>
</dbReference>
<dbReference type="EMBL" id="CP002684">
    <property type="protein sequence ID" value="AEE31501.1"/>
    <property type="molecule type" value="Genomic_DNA"/>
</dbReference>
<dbReference type="EMBL" id="AY080800">
    <property type="protein sequence ID" value="AAL87281.1"/>
    <property type="molecule type" value="mRNA"/>
</dbReference>
<dbReference type="EMBL" id="AY114079">
    <property type="protein sequence ID" value="AAM45127.1"/>
    <property type="molecule type" value="mRNA"/>
</dbReference>
<dbReference type="PIR" id="A86451">
    <property type="entry name" value="A86451"/>
</dbReference>
<dbReference type="RefSeq" id="NP_174533.1">
    <property type="nucleotide sequence ID" value="NM_102990.5"/>
</dbReference>
<dbReference type="SMR" id="Q9C7Y4"/>
<dbReference type="FunCoup" id="Q9C7Y4">
    <property type="interactions" value="920"/>
</dbReference>
<dbReference type="STRING" id="3702.Q9C7Y4"/>
<dbReference type="PaxDb" id="3702-AT1G32550.2"/>
<dbReference type="ProteomicsDB" id="230569"/>
<dbReference type="EnsemblPlants" id="AT1G32550.1">
    <property type="protein sequence ID" value="AT1G32550.1"/>
    <property type="gene ID" value="AT1G32550"/>
</dbReference>
<dbReference type="GeneID" id="840149"/>
<dbReference type="Gramene" id="AT1G32550.1">
    <property type="protein sequence ID" value="AT1G32550.1"/>
    <property type="gene ID" value="AT1G32550"/>
</dbReference>
<dbReference type="KEGG" id="ath:AT1G32550"/>
<dbReference type="Araport" id="AT1G32550"/>
<dbReference type="TAIR" id="AT1G32550">
    <property type="gene designation" value="FDC2"/>
</dbReference>
<dbReference type="InParanoid" id="Q9C7Y4"/>
<dbReference type="OrthoDB" id="1885901at2759"/>
<dbReference type="PhylomeDB" id="Q9C7Y4"/>
<dbReference type="PRO" id="PR:Q9C7Y4"/>
<dbReference type="Proteomes" id="UP000006548">
    <property type="component" value="Chromosome 1"/>
</dbReference>
<dbReference type="ExpressionAtlas" id="Q9C7Y4">
    <property type="expression patterns" value="baseline and differential"/>
</dbReference>
<dbReference type="GO" id="GO:0009507">
    <property type="term" value="C:chloroplast"/>
    <property type="evidence" value="ECO:0007669"/>
    <property type="project" value="UniProtKB-SubCell"/>
</dbReference>
<dbReference type="GO" id="GO:0051537">
    <property type="term" value="F:2 iron, 2 sulfur cluster binding"/>
    <property type="evidence" value="ECO:0007669"/>
    <property type="project" value="UniProtKB-KW"/>
</dbReference>
<dbReference type="GO" id="GO:0009055">
    <property type="term" value="F:electron transfer activity"/>
    <property type="evidence" value="ECO:0007669"/>
    <property type="project" value="InterPro"/>
</dbReference>
<dbReference type="GO" id="GO:0046872">
    <property type="term" value="F:metal ion binding"/>
    <property type="evidence" value="ECO:0007669"/>
    <property type="project" value="UniProtKB-KW"/>
</dbReference>
<dbReference type="GO" id="GO:0022900">
    <property type="term" value="P:electron transport chain"/>
    <property type="evidence" value="ECO:0007669"/>
    <property type="project" value="InterPro"/>
</dbReference>
<dbReference type="CDD" id="cd00207">
    <property type="entry name" value="fer2"/>
    <property type="match status" value="1"/>
</dbReference>
<dbReference type="Gene3D" id="3.10.20.30">
    <property type="match status" value="1"/>
</dbReference>
<dbReference type="InterPro" id="IPR036010">
    <property type="entry name" value="2Fe-2S_ferredoxin-like_sf"/>
</dbReference>
<dbReference type="InterPro" id="IPR001041">
    <property type="entry name" value="2Fe-2S_ferredoxin-type"/>
</dbReference>
<dbReference type="InterPro" id="IPR012675">
    <property type="entry name" value="Beta-grasp_dom_sf"/>
</dbReference>
<dbReference type="InterPro" id="IPR010241">
    <property type="entry name" value="Fd_pln"/>
</dbReference>
<dbReference type="NCBIfam" id="TIGR02008">
    <property type="entry name" value="fdx_plant"/>
    <property type="match status" value="1"/>
</dbReference>
<dbReference type="PANTHER" id="PTHR43112">
    <property type="entry name" value="FERREDOXIN"/>
    <property type="match status" value="1"/>
</dbReference>
<dbReference type="PANTHER" id="PTHR43112:SF10">
    <property type="entry name" value="FERREDOXIN C 2, CHLOROPLASTIC"/>
    <property type="match status" value="1"/>
</dbReference>
<dbReference type="Pfam" id="PF00111">
    <property type="entry name" value="Fer2"/>
    <property type="match status" value="1"/>
</dbReference>
<dbReference type="SUPFAM" id="SSF54292">
    <property type="entry name" value="2Fe-2S ferredoxin-like"/>
    <property type="match status" value="1"/>
</dbReference>
<dbReference type="PROSITE" id="PS51085">
    <property type="entry name" value="2FE2S_FER_2"/>
    <property type="match status" value="1"/>
</dbReference>
<reference key="1">
    <citation type="journal article" date="2000" name="Nature">
        <title>Sequence and analysis of chromosome 1 of the plant Arabidopsis thaliana.</title>
        <authorList>
            <person name="Theologis A."/>
            <person name="Ecker J.R."/>
            <person name="Palm C.J."/>
            <person name="Federspiel N.A."/>
            <person name="Kaul S."/>
            <person name="White O."/>
            <person name="Alonso J."/>
            <person name="Altafi H."/>
            <person name="Araujo R."/>
            <person name="Bowman C.L."/>
            <person name="Brooks S.Y."/>
            <person name="Buehler E."/>
            <person name="Chan A."/>
            <person name="Chao Q."/>
            <person name="Chen H."/>
            <person name="Cheuk R.F."/>
            <person name="Chin C.W."/>
            <person name="Chung M.K."/>
            <person name="Conn L."/>
            <person name="Conway A.B."/>
            <person name="Conway A.R."/>
            <person name="Creasy T.H."/>
            <person name="Dewar K."/>
            <person name="Dunn P."/>
            <person name="Etgu P."/>
            <person name="Feldblyum T.V."/>
            <person name="Feng J.-D."/>
            <person name="Fong B."/>
            <person name="Fujii C.Y."/>
            <person name="Gill J.E."/>
            <person name="Goldsmith A.D."/>
            <person name="Haas B."/>
            <person name="Hansen N.F."/>
            <person name="Hughes B."/>
            <person name="Huizar L."/>
            <person name="Hunter J.L."/>
            <person name="Jenkins J."/>
            <person name="Johnson-Hopson C."/>
            <person name="Khan S."/>
            <person name="Khaykin E."/>
            <person name="Kim C.J."/>
            <person name="Koo H.L."/>
            <person name="Kremenetskaia I."/>
            <person name="Kurtz D.B."/>
            <person name="Kwan A."/>
            <person name="Lam B."/>
            <person name="Langin-Hooper S."/>
            <person name="Lee A."/>
            <person name="Lee J.M."/>
            <person name="Lenz C.A."/>
            <person name="Li J.H."/>
            <person name="Li Y.-P."/>
            <person name="Lin X."/>
            <person name="Liu S.X."/>
            <person name="Liu Z.A."/>
            <person name="Luros J.S."/>
            <person name="Maiti R."/>
            <person name="Marziali A."/>
            <person name="Militscher J."/>
            <person name="Miranda M."/>
            <person name="Nguyen M."/>
            <person name="Nierman W.C."/>
            <person name="Osborne B.I."/>
            <person name="Pai G."/>
            <person name="Peterson J."/>
            <person name="Pham P.K."/>
            <person name="Rizzo M."/>
            <person name="Rooney T."/>
            <person name="Rowley D."/>
            <person name="Sakano H."/>
            <person name="Salzberg S.L."/>
            <person name="Schwartz J.R."/>
            <person name="Shinn P."/>
            <person name="Southwick A.M."/>
            <person name="Sun H."/>
            <person name="Tallon L.J."/>
            <person name="Tambunga G."/>
            <person name="Toriumi M.J."/>
            <person name="Town C.D."/>
            <person name="Utterback T."/>
            <person name="Van Aken S."/>
            <person name="Vaysberg M."/>
            <person name="Vysotskaia V.S."/>
            <person name="Walker M."/>
            <person name="Wu D."/>
            <person name="Yu G."/>
            <person name="Fraser C.M."/>
            <person name="Venter J.C."/>
            <person name="Davis R.W."/>
        </authorList>
    </citation>
    <scope>NUCLEOTIDE SEQUENCE [LARGE SCALE GENOMIC DNA]</scope>
    <source>
        <strain>cv. Columbia</strain>
    </source>
</reference>
<reference key="2">
    <citation type="journal article" date="2017" name="Plant J.">
        <title>Araport11: a complete reannotation of the Arabidopsis thaliana reference genome.</title>
        <authorList>
            <person name="Cheng C.Y."/>
            <person name="Krishnakumar V."/>
            <person name="Chan A.P."/>
            <person name="Thibaud-Nissen F."/>
            <person name="Schobel S."/>
            <person name="Town C.D."/>
        </authorList>
    </citation>
    <scope>GENOME REANNOTATION</scope>
    <source>
        <strain>cv. Columbia</strain>
    </source>
</reference>
<reference key="3">
    <citation type="journal article" date="2003" name="Science">
        <title>Empirical analysis of transcriptional activity in the Arabidopsis genome.</title>
        <authorList>
            <person name="Yamada K."/>
            <person name="Lim J."/>
            <person name="Dale J.M."/>
            <person name="Chen H."/>
            <person name="Shinn P."/>
            <person name="Palm C.J."/>
            <person name="Southwick A.M."/>
            <person name="Wu H.C."/>
            <person name="Kim C.J."/>
            <person name="Nguyen M."/>
            <person name="Pham P.K."/>
            <person name="Cheuk R.F."/>
            <person name="Karlin-Newmann G."/>
            <person name="Liu S.X."/>
            <person name="Lam B."/>
            <person name="Sakano H."/>
            <person name="Wu T."/>
            <person name="Yu G."/>
            <person name="Miranda M."/>
            <person name="Quach H.L."/>
            <person name="Tripp M."/>
            <person name="Chang C.H."/>
            <person name="Lee J.M."/>
            <person name="Toriumi M.J."/>
            <person name="Chan M.M."/>
            <person name="Tang C.C."/>
            <person name="Onodera C.S."/>
            <person name="Deng J.M."/>
            <person name="Akiyama K."/>
            <person name="Ansari Y."/>
            <person name="Arakawa T."/>
            <person name="Banh J."/>
            <person name="Banno F."/>
            <person name="Bowser L."/>
            <person name="Brooks S.Y."/>
            <person name="Carninci P."/>
            <person name="Chao Q."/>
            <person name="Choy N."/>
            <person name="Enju A."/>
            <person name="Goldsmith A.D."/>
            <person name="Gurjal M."/>
            <person name="Hansen N.F."/>
            <person name="Hayashizaki Y."/>
            <person name="Johnson-Hopson C."/>
            <person name="Hsuan V.W."/>
            <person name="Iida K."/>
            <person name="Karnes M."/>
            <person name="Khan S."/>
            <person name="Koesema E."/>
            <person name="Ishida J."/>
            <person name="Jiang P.X."/>
            <person name="Jones T."/>
            <person name="Kawai J."/>
            <person name="Kamiya A."/>
            <person name="Meyers C."/>
            <person name="Nakajima M."/>
            <person name="Narusaka M."/>
            <person name="Seki M."/>
            <person name="Sakurai T."/>
            <person name="Satou M."/>
            <person name="Tamse R."/>
            <person name="Vaysberg M."/>
            <person name="Wallender E.K."/>
            <person name="Wong C."/>
            <person name="Yamamura Y."/>
            <person name="Yuan S."/>
            <person name="Shinozaki K."/>
            <person name="Davis R.W."/>
            <person name="Theologis A."/>
            <person name="Ecker J.R."/>
        </authorList>
    </citation>
    <scope>NUCLEOTIDE SEQUENCE [LARGE SCALE MRNA]</scope>
    <source>
        <strain>cv. Columbia</strain>
    </source>
</reference>
<reference key="4">
    <citation type="journal article" date="2004" name="Plant Physiol.">
        <title>A post genomic characterization of Arabidopsis ferredoxins.</title>
        <authorList>
            <person name="Hanke G.T."/>
            <person name="Kimata-Ariga Y."/>
            <person name="Taniguchi I."/>
            <person name="Hase T."/>
        </authorList>
    </citation>
    <scope>GENE FAMILY</scope>
</reference>
<reference key="5">
    <citation type="journal article" date="2011" name="J. Biol. Chem.">
        <title>FdC1, a novel ferredoxin protein capable of alternative electron partitioning, increases in conditions of acceptor limitation at photosystem I.</title>
        <authorList>
            <person name="Voss I."/>
            <person name="Goss T."/>
            <person name="Murozuka E."/>
            <person name="Altmann B."/>
            <person name="McLean K.J."/>
            <person name="Rigby S.E.J."/>
            <person name="Munro A.W."/>
            <person name="Scheibe R."/>
            <person name="Hase T."/>
            <person name="Hanke G.T."/>
        </authorList>
    </citation>
    <scope>INDUCTION</scope>
    <scope>NOMENCLATURE</scope>
    <source>
        <strain>cv. Columbia</strain>
        <strain>cv. No-0</strain>
    </source>
</reference>
<name>FDC2_ARATH</name>
<evidence type="ECO:0000250" key="1">
    <source>
        <dbReference type="UniProtKB" id="O23344"/>
    </source>
</evidence>
<evidence type="ECO:0000255" key="2"/>
<evidence type="ECO:0000255" key="3">
    <source>
        <dbReference type="PROSITE-ProRule" id="PRU00465"/>
    </source>
</evidence>
<evidence type="ECO:0000269" key="4">
    <source>
    </source>
</evidence>
<evidence type="ECO:0000303" key="5">
    <source>
    </source>
</evidence>
<evidence type="ECO:0000305" key="6"/>
<evidence type="ECO:0000312" key="7">
    <source>
        <dbReference type="Araport" id="AT1G32550"/>
    </source>
</evidence>
<evidence type="ECO:0000312" key="8">
    <source>
        <dbReference type="EMBL" id="AAG51248.1"/>
    </source>
</evidence>
<keyword id="KW-0001">2Fe-2S</keyword>
<keyword id="KW-0150">Chloroplast</keyword>
<keyword id="KW-0249">Electron transport</keyword>
<keyword id="KW-0408">Iron</keyword>
<keyword id="KW-0411">Iron-sulfur</keyword>
<keyword id="KW-0479">Metal-binding</keyword>
<keyword id="KW-0934">Plastid</keyword>
<keyword id="KW-1185">Reference proteome</keyword>
<keyword id="KW-0809">Transit peptide</keyword>
<keyword id="KW-0813">Transport</keyword>
<comment type="function">
    <text evidence="1 6">Ferredoxins are iron-sulfur proteins that transfer electrons in a wide variety of metabolic reactions (Probable). Mediates alternative electron partitioning in conditions of acceptor limitation at photosystem I (By similarity).</text>
</comment>
<comment type="cofactor">
    <cofactor evidence="3">
        <name>[2Fe-2S] cluster</name>
        <dbReference type="ChEBI" id="CHEBI:190135"/>
    </cofactor>
    <text evidence="3">Binds 1 [2Fe-2S] cluster.</text>
</comment>
<comment type="subcellular location">
    <subcellularLocation>
        <location evidence="1">Plastid</location>
        <location evidence="1">Chloroplast</location>
    </subcellularLocation>
</comment>
<comment type="induction">
    <text evidence="4">Slightly up-regulated in response to acceptor limitation at photosystem I (PSI) in plants lacking of photosynthetic [2Fe-2S] ferredoxin (Fd).</text>
</comment>
<comment type="similarity">
    <text evidence="6">Belongs to the 2Fe2S plant-type ferredoxin family.</text>
</comment>
<organism>
    <name type="scientific">Arabidopsis thaliana</name>
    <name type="common">Mouse-ear cress</name>
    <dbReference type="NCBI Taxonomy" id="3702"/>
    <lineage>
        <taxon>Eukaryota</taxon>
        <taxon>Viridiplantae</taxon>
        <taxon>Streptophyta</taxon>
        <taxon>Embryophyta</taxon>
        <taxon>Tracheophyta</taxon>
        <taxon>Spermatophyta</taxon>
        <taxon>Magnoliopsida</taxon>
        <taxon>eudicotyledons</taxon>
        <taxon>Gunneridae</taxon>
        <taxon>Pentapetalae</taxon>
        <taxon>rosids</taxon>
        <taxon>malvids</taxon>
        <taxon>Brassicales</taxon>
        <taxon>Brassicaceae</taxon>
        <taxon>Camelineae</taxon>
        <taxon>Arabidopsis</taxon>
    </lineage>
</organism>
<gene>
    <name evidence="5" type="primary">FDC2</name>
    <name evidence="7" type="ordered locus">At1g32550</name>
    <name evidence="8" type="ORF">T9G5.4</name>
</gene>